<name>DBH_STRDO</name>
<protein>
    <recommendedName>
        <fullName>DNA-binding protein HU</fullName>
    </recommendedName>
</protein>
<organism>
    <name type="scientific">Streptococcus downei</name>
    <name type="common">Streptococcus sobrinus</name>
    <dbReference type="NCBI Taxonomy" id="1317"/>
    <lineage>
        <taxon>Bacteria</taxon>
        <taxon>Bacillati</taxon>
        <taxon>Bacillota</taxon>
        <taxon>Bacilli</taxon>
        <taxon>Lactobacillales</taxon>
        <taxon>Streptococcaceae</taxon>
        <taxon>Streptococcus</taxon>
    </lineage>
</organism>
<sequence length="91" mass="9663">MANKQDLIAKVAEATELTKKDSAAAVDTVFSSIEGFLSKGEKVQLIGFGNFEVRERAARKGRNPQTGAEIKIAASKVPAFKAGKALKDAVK</sequence>
<reference key="1">
    <citation type="journal article" date="1998" name="Infect. Immun.">
        <title>Streptococcal histone-like protein: primary structure of hlpA and protein binding to lipoteichoic acid and epithelial cells.</title>
        <authorList>
            <person name="Stinson M.W."/>
            <person name="McLaughlin R."/>
            <person name="Choi S.H."/>
            <person name="Juarez Z.E."/>
            <person name="Barnard J."/>
        </authorList>
    </citation>
    <scope>NUCLEOTIDE SEQUENCE [GENOMIC DNA]</scope>
</reference>
<proteinExistence type="inferred from homology"/>
<keyword id="KW-0226">DNA condensation</keyword>
<keyword id="KW-0238">DNA-binding</keyword>
<keyword id="KW-0843">Virulence</keyword>
<dbReference type="EMBL" id="L38959">
    <property type="protein sequence ID" value="AAD40809.1"/>
    <property type="molecule type" value="Genomic_DNA"/>
</dbReference>
<dbReference type="SMR" id="Q9XB22"/>
<dbReference type="GO" id="GO:0005829">
    <property type="term" value="C:cytosol"/>
    <property type="evidence" value="ECO:0007669"/>
    <property type="project" value="TreeGrafter"/>
</dbReference>
<dbReference type="GO" id="GO:0003677">
    <property type="term" value="F:DNA binding"/>
    <property type="evidence" value="ECO:0007669"/>
    <property type="project" value="UniProtKB-KW"/>
</dbReference>
<dbReference type="GO" id="GO:0030527">
    <property type="term" value="F:structural constituent of chromatin"/>
    <property type="evidence" value="ECO:0007669"/>
    <property type="project" value="InterPro"/>
</dbReference>
<dbReference type="GO" id="GO:0030261">
    <property type="term" value="P:chromosome condensation"/>
    <property type="evidence" value="ECO:0007669"/>
    <property type="project" value="UniProtKB-KW"/>
</dbReference>
<dbReference type="CDD" id="cd13831">
    <property type="entry name" value="HU"/>
    <property type="match status" value="1"/>
</dbReference>
<dbReference type="FunFam" id="4.10.520.10:FF:000001">
    <property type="entry name" value="DNA-binding protein HU"/>
    <property type="match status" value="1"/>
</dbReference>
<dbReference type="Gene3D" id="4.10.520.10">
    <property type="entry name" value="IHF-like DNA-binding proteins"/>
    <property type="match status" value="1"/>
</dbReference>
<dbReference type="InterPro" id="IPR000119">
    <property type="entry name" value="Hist_DNA-bd"/>
</dbReference>
<dbReference type="InterPro" id="IPR020816">
    <property type="entry name" value="Histone-like_DNA-bd_CS"/>
</dbReference>
<dbReference type="InterPro" id="IPR010992">
    <property type="entry name" value="IHF-like_DNA-bd_dom_sf"/>
</dbReference>
<dbReference type="PANTHER" id="PTHR33175">
    <property type="entry name" value="DNA-BINDING PROTEIN HU"/>
    <property type="match status" value="1"/>
</dbReference>
<dbReference type="PANTHER" id="PTHR33175:SF3">
    <property type="entry name" value="DNA-BINDING PROTEIN HU-BETA"/>
    <property type="match status" value="1"/>
</dbReference>
<dbReference type="Pfam" id="PF00216">
    <property type="entry name" value="Bac_DNA_binding"/>
    <property type="match status" value="1"/>
</dbReference>
<dbReference type="PRINTS" id="PR01727">
    <property type="entry name" value="DNABINDINGHU"/>
</dbReference>
<dbReference type="SMART" id="SM00411">
    <property type="entry name" value="BHL"/>
    <property type="match status" value="1"/>
</dbReference>
<dbReference type="SUPFAM" id="SSF47729">
    <property type="entry name" value="IHF-like DNA-binding proteins"/>
    <property type="match status" value="1"/>
</dbReference>
<dbReference type="PROSITE" id="PS00045">
    <property type="entry name" value="HISTONE_LIKE"/>
    <property type="match status" value="1"/>
</dbReference>
<evidence type="ECO:0000305" key="1"/>
<accession>Q9XB22</accession>
<comment type="function">
    <text>Histone-like DNA-binding protein which is capable of wrapping DNA to stabilize it, and thus to prevent its denaturation under extreme environmental conditions. Also seems to act as a fortuitous virulence factor in delayed sequelae by binding to heparan sulfate-proteoglycans in the extracellular matrix of target organs and acting as a nidus for in situ immune complex formation.</text>
</comment>
<comment type="similarity">
    <text evidence="1">Belongs to the bacterial histone-like protein family.</text>
</comment>
<feature type="chain" id="PRO_0000104978" description="DNA-binding protein HU">
    <location>
        <begin position="1"/>
        <end position="91"/>
    </location>
</feature>
<gene>
    <name type="primary">hup</name>
    <name type="synonym">hlpA</name>
</gene>